<evidence type="ECO:0000250" key="1"/>
<evidence type="ECO:0000305" key="2"/>
<proteinExistence type="evidence at transcript level"/>
<name>PP2A_TOBAC</name>
<comment type="catalytic activity">
    <reaction>
        <text>O-phospho-L-seryl-[protein] + H2O = L-seryl-[protein] + phosphate</text>
        <dbReference type="Rhea" id="RHEA:20629"/>
        <dbReference type="Rhea" id="RHEA-COMP:9863"/>
        <dbReference type="Rhea" id="RHEA-COMP:11604"/>
        <dbReference type="ChEBI" id="CHEBI:15377"/>
        <dbReference type="ChEBI" id="CHEBI:29999"/>
        <dbReference type="ChEBI" id="CHEBI:43474"/>
        <dbReference type="ChEBI" id="CHEBI:83421"/>
        <dbReference type="EC" id="3.1.3.16"/>
    </reaction>
</comment>
<comment type="catalytic activity">
    <reaction>
        <text>O-phospho-L-threonyl-[protein] + H2O = L-threonyl-[protein] + phosphate</text>
        <dbReference type="Rhea" id="RHEA:47004"/>
        <dbReference type="Rhea" id="RHEA-COMP:11060"/>
        <dbReference type="Rhea" id="RHEA-COMP:11605"/>
        <dbReference type="ChEBI" id="CHEBI:15377"/>
        <dbReference type="ChEBI" id="CHEBI:30013"/>
        <dbReference type="ChEBI" id="CHEBI:43474"/>
        <dbReference type="ChEBI" id="CHEBI:61977"/>
        <dbReference type="EC" id="3.1.3.16"/>
    </reaction>
</comment>
<comment type="cofactor">
    <cofactor evidence="1">
        <name>Mn(2+)</name>
        <dbReference type="ChEBI" id="CHEBI:29035"/>
    </cofactor>
    <text evidence="1">Binds 2 manganese ions per subunit.</text>
</comment>
<comment type="subcellular location">
    <subcellularLocation>
        <location evidence="1">Cytoplasm</location>
    </subcellularLocation>
</comment>
<comment type="similarity">
    <text evidence="2">Belongs to the PPP phosphatase family. PP-2A subfamily.</text>
</comment>
<protein>
    <recommendedName>
        <fullName>Serine/threonine-protein phosphatase PP2A catalytic subunit</fullName>
        <ecNumber>3.1.3.16</ecNumber>
    </recommendedName>
</protein>
<sequence length="312" mass="35639">MDPVPSSASHGNLDEQIAQLMQCKPLSEQEVRGLCEKAKEILMEESNVQPVKSPVTICGDIHGQFHDLAELFRIGGKCPDTNYLFMGDYVDRGYYSVETVTLLVALKVRYPQRITILRGNHESRQITQVYGFYDECLRKYGNANVWKTFTDLFDYFPLTALVESEIFCLHGGLSPSIETLDNIRNFDRVQEVPHEGAMCDLLWSDPDDRCGWGISPRGAGYTFGQDISEQFNHTNNLKLIARAHQLVMEGFNWAHDQKVVTIFSAPNYCYRCGNMASILEVDDSRERTFIQFEPAPRRGEPDVTRRTPDYFL</sequence>
<feature type="chain" id="PRO_0000058865" description="Serine/threonine-protein phosphatase PP2A catalytic subunit">
    <location>
        <begin position="1"/>
        <end position="312"/>
    </location>
</feature>
<feature type="active site" description="Proton donor" evidence="1">
    <location>
        <position position="121"/>
    </location>
</feature>
<feature type="binding site" evidence="1">
    <location>
        <position position="60"/>
    </location>
    <ligand>
        <name>Mn(2+)</name>
        <dbReference type="ChEBI" id="CHEBI:29035"/>
        <label>1</label>
    </ligand>
</feature>
<feature type="binding site" evidence="1">
    <location>
        <position position="62"/>
    </location>
    <ligand>
        <name>Mn(2+)</name>
        <dbReference type="ChEBI" id="CHEBI:29035"/>
        <label>1</label>
    </ligand>
</feature>
<feature type="binding site" evidence="1">
    <location>
        <position position="88"/>
    </location>
    <ligand>
        <name>Mn(2+)</name>
        <dbReference type="ChEBI" id="CHEBI:29035"/>
        <label>1</label>
    </ligand>
</feature>
<feature type="binding site" evidence="1">
    <location>
        <position position="88"/>
    </location>
    <ligand>
        <name>Mn(2+)</name>
        <dbReference type="ChEBI" id="CHEBI:29035"/>
        <label>2</label>
    </ligand>
</feature>
<feature type="binding site" evidence="1">
    <location>
        <position position="120"/>
    </location>
    <ligand>
        <name>Mn(2+)</name>
        <dbReference type="ChEBI" id="CHEBI:29035"/>
        <label>2</label>
    </ligand>
</feature>
<feature type="binding site" evidence="1">
    <location>
        <position position="170"/>
    </location>
    <ligand>
        <name>Mn(2+)</name>
        <dbReference type="ChEBI" id="CHEBI:29035"/>
        <label>2</label>
    </ligand>
</feature>
<feature type="binding site" evidence="1">
    <location>
        <position position="244"/>
    </location>
    <ligand>
        <name>Mn(2+)</name>
        <dbReference type="ChEBI" id="CHEBI:29035"/>
        <label>2</label>
    </ligand>
</feature>
<keyword id="KW-0963">Cytoplasm</keyword>
<keyword id="KW-0378">Hydrolase</keyword>
<keyword id="KW-0464">Manganese</keyword>
<keyword id="KW-0479">Metal-binding</keyword>
<keyword id="KW-0904">Protein phosphatase</keyword>
<keyword id="KW-1185">Reference proteome</keyword>
<accession>Q9XGH7</accession>
<dbReference type="EC" id="3.1.3.16"/>
<dbReference type="EMBL" id="AJ007496">
    <property type="protein sequence ID" value="CAB46506.1"/>
    <property type="molecule type" value="mRNA"/>
</dbReference>
<dbReference type="RefSeq" id="NP_001312211.1">
    <property type="nucleotide sequence ID" value="NM_001325282.1"/>
</dbReference>
<dbReference type="RefSeq" id="XP_016462375.1">
    <property type="nucleotide sequence ID" value="XM_016606889.1"/>
</dbReference>
<dbReference type="SMR" id="Q9XGH7"/>
<dbReference type="STRING" id="4097.Q9XGH7"/>
<dbReference type="PaxDb" id="4097-Q9XGH7"/>
<dbReference type="GeneID" id="107779504"/>
<dbReference type="GeneID" id="107785560"/>
<dbReference type="KEGG" id="nta:107779504"/>
<dbReference type="KEGG" id="nta:107785560"/>
<dbReference type="OMA" id="GWGISPC"/>
<dbReference type="OrthoDB" id="1930084at2759"/>
<dbReference type="PhylomeDB" id="Q9XGH7"/>
<dbReference type="Proteomes" id="UP000084051">
    <property type="component" value="Unplaced"/>
</dbReference>
<dbReference type="GO" id="GO:0005829">
    <property type="term" value="C:cytosol"/>
    <property type="evidence" value="ECO:0000318"/>
    <property type="project" value="GO_Central"/>
</dbReference>
<dbReference type="GO" id="GO:0005634">
    <property type="term" value="C:nucleus"/>
    <property type="evidence" value="ECO:0000318"/>
    <property type="project" value="GO_Central"/>
</dbReference>
<dbReference type="GO" id="GO:0046872">
    <property type="term" value="F:metal ion binding"/>
    <property type="evidence" value="ECO:0007669"/>
    <property type="project" value="UniProtKB-KW"/>
</dbReference>
<dbReference type="GO" id="GO:0004722">
    <property type="term" value="F:protein serine/threonine phosphatase activity"/>
    <property type="evidence" value="ECO:0000318"/>
    <property type="project" value="GO_Central"/>
</dbReference>
<dbReference type="GO" id="GO:0000278">
    <property type="term" value="P:mitotic cell cycle"/>
    <property type="evidence" value="ECO:0000318"/>
    <property type="project" value="GO_Central"/>
</dbReference>
<dbReference type="CDD" id="cd07415">
    <property type="entry name" value="MPP_PP2A_PP4_PP6"/>
    <property type="match status" value="1"/>
</dbReference>
<dbReference type="FunFam" id="3.60.21.10:FF:000003">
    <property type="entry name" value="Serine/threonine-protein phosphatase"/>
    <property type="match status" value="1"/>
</dbReference>
<dbReference type="Gene3D" id="3.60.21.10">
    <property type="match status" value="1"/>
</dbReference>
<dbReference type="InterPro" id="IPR004843">
    <property type="entry name" value="Calcineurin-like_PHP_ApaH"/>
</dbReference>
<dbReference type="InterPro" id="IPR029052">
    <property type="entry name" value="Metallo-depent_PP-like"/>
</dbReference>
<dbReference type="InterPro" id="IPR047129">
    <property type="entry name" value="PPA2-like"/>
</dbReference>
<dbReference type="InterPro" id="IPR006186">
    <property type="entry name" value="Ser/Thr-sp_prot-phosphatase"/>
</dbReference>
<dbReference type="PANTHER" id="PTHR45619">
    <property type="entry name" value="SERINE/THREONINE-PROTEIN PHOSPHATASE PP2A-RELATED"/>
    <property type="match status" value="1"/>
</dbReference>
<dbReference type="Pfam" id="PF00149">
    <property type="entry name" value="Metallophos"/>
    <property type="match status" value="1"/>
</dbReference>
<dbReference type="PRINTS" id="PR00114">
    <property type="entry name" value="STPHPHTASE"/>
</dbReference>
<dbReference type="SMART" id="SM00156">
    <property type="entry name" value="PP2Ac"/>
    <property type="match status" value="1"/>
</dbReference>
<dbReference type="SUPFAM" id="SSF56300">
    <property type="entry name" value="Metallo-dependent phosphatases"/>
    <property type="match status" value="1"/>
</dbReference>
<dbReference type="PROSITE" id="PS00125">
    <property type="entry name" value="SER_THR_PHOSPHATASE"/>
    <property type="match status" value="1"/>
</dbReference>
<reference key="1">
    <citation type="submission" date="1998-06" db="EMBL/GenBank/DDBJ databases">
        <title>Molecular analysis of protein phosphatase 2A in tobacco.</title>
        <authorList>
            <person name="Remus M."/>
            <person name="Stitt M."/>
            <person name="Zrenner R."/>
        </authorList>
    </citation>
    <scope>NUCLEOTIDE SEQUENCE [MRNA]</scope>
    <source>
        <strain>cv. SR1</strain>
    </source>
</reference>
<organism>
    <name type="scientific">Nicotiana tabacum</name>
    <name type="common">Common tobacco</name>
    <dbReference type="NCBI Taxonomy" id="4097"/>
    <lineage>
        <taxon>Eukaryota</taxon>
        <taxon>Viridiplantae</taxon>
        <taxon>Streptophyta</taxon>
        <taxon>Embryophyta</taxon>
        <taxon>Tracheophyta</taxon>
        <taxon>Spermatophyta</taxon>
        <taxon>Magnoliopsida</taxon>
        <taxon>eudicotyledons</taxon>
        <taxon>Gunneridae</taxon>
        <taxon>Pentapetalae</taxon>
        <taxon>asterids</taxon>
        <taxon>lamiids</taxon>
        <taxon>Solanales</taxon>
        <taxon>Solanaceae</taxon>
        <taxon>Nicotianoideae</taxon>
        <taxon>Nicotianeae</taxon>
        <taxon>Nicotiana</taxon>
    </lineage>
</organism>